<accession>P67559</accession>
<accession>Q83RU4</accession>
<accession>Q8FIS5</accession>
<reference key="1">
    <citation type="journal article" date="2002" name="Proc. Natl. Acad. Sci. U.S.A.">
        <title>Extensive mosaic structure revealed by the complete genome sequence of uropathogenic Escherichia coli.</title>
        <authorList>
            <person name="Welch R.A."/>
            <person name="Burland V."/>
            <person name="Plunkett G. III"/>
            <person name="Redford P."/>
            <person name="Roesch P."/>
            <person name="Rasko D."/>
            <person name="Buckles E.L."/>
            <person name="Liou S.-R."/>
            <person name="Boutin A."/>
            <person name="Hackett J."/>
            <person name="Stroud D."/>
            <person name="Mayhew G.F."/>
            <person name="Rose D.J."/>
            <person name="Zhou S."/>
            <person name="Schwartz D.C."/>
            <person name="Perna N.T."/>
            <person name="Mobley H.L.T."/>
            <person name="Donnenberg M.S."/>
            <person name="Blattner F.R."/>
        </authorList>
    </citation>
    <scope>NUCLEOTIDE SEQUENCE [LARGE SCALE GENOMIC DNA]</scope>
    <source>
        <strain>CFT073 / ATCC 700928 / UPEC</strain>
    </source>
</reference>
<gene>
    <name evidence="1" type="primary">mdoC</name>
    <name evidence="1" type="synonym">opgC</name>
    <name type="ordered locus">c1311</name>
</gene>
<proteinExistence type="inferred from homology"/>
<dbReference type="EC" id="2.1.-.-" evidence="1"/>
<dbReference type="EMBL" id="AE014075">
    <property type="protein sequence ID" value="AAN79784.1"/>
    <property type="molecule type" value="Genomic_DNA"/>
</dbReference>
<dbReference type="RefSeq" id="WP_001070350.1">
    <property type="nucleotide sequence ID" value="NZ_CP051263.1"/>
</dbReference>
<dbReference type="STRING" id="199310.c1311"/>
<dbReference type="GeneID" id="93776367"/>
<dbReference type="KEGG" id="ecc:c1311"/>
<dbReference type="eggNOG" id="COG1835">
    <property type="taxonomic scope" value="Bacteria"/>
</dbReference>
<dbReference type="HOGENOM" id="CLU_036182_2_0_6"/>
<dbReference type="BioCyc" id="ECOL199310:C1311-MONOMER"/>
<dbReference type="UniPathway" id="UPA00637"/>
<dbReference type="Proteomes" id="UP000001410">
    <property type="component" value="Chromosome"/>
</dbReference>
<dbReference type="GO" id="GO:0005886">
    <property type="term" value="C:plasma membrane"/>
    <property type="evidence" value="ECO:0007669"/>
    <property type="project" value="UniProtKB-SubCell"/>
</dbReference>
<dbReference type="GO" id="GO:0016747">
    <property type="term" value="F:acyltransferase activity, transferring groups other than amino-acyl groups"/>
    <property type="evidence" value="ECO:0007669"/>
    <property type="project" value="InterPro"/>
</dbReference>
<dbReference type="GO" id="GO:0016741">
    <property type="term" value="F:transferase activity, transferring one-carbon groups"/>
    <property type="evidence" value="ECO:0007669"/>
    <property type="project" value="UniProtKB-UniRule"/>
</dbReference>
<dbReference type="GO" id="GO:0009250">
    <property type="term" value="P:glucan biosynthetic process"/>
    <property type="evidence" value="ECO:0007669"/>
    <property type="project" value="UniProtKB-UniRule"/>
</dbReference>
<dbReference type="HAMAP" id="MF_01066">
    <property type="entry name" value="MdoC_OpgC"/>
    <property type="match status" value="1"/>
</dbReference>
<dbReference type="InterPro" id="IPR002656">
    <property type="entry name" value="Acyl_transf_3_dom"/>
</dbReference>
<dbReference type="InterPro" id="IPR050623">
    <property type="entry name" value="Glucan_succinyl_AcylTrfase"/>
</dbReference>
<dbReference type="InterPro" id="IPR023723">
    <property type="entry name" value="Glucans_biosynth_C"/>
</dbReference>
<dbReference type="NCBIfam" id="NF003014">
    <property type="entry name" value="PRK03854.1"/>
    <property type="match status" value="1"/>
</dbReference>
<dbReference type="PANTHER" id="PTHR36927">
    <property type="entry name" value="BLR4337 PROTEIN"/>
    <property type="match status" value="1"/>
</dbReference>
<dbReference type="PANTHER" id="PTHR36927:SF3">
    <property type="entry name" value="GLUCANS BIOSYNTHESIS PROTEIN C"/>
    <property type="match status" value="1"/>
</dbReference>
<dbReference type="Pfam" id="PF01757">
    <property type="entry name" value="Acyl_transf_3"/>
    <property type="match status" value="1"/>
</dbReference>
<name>OPGC_ECOL6</name>
<organism>
    <name type="scientific">Escherichia coli O6:H1 (strain CFT073 / ATCC 700928 / UPEC)</name>
    <dbReference type="NCBI Taxonomy" id="199310"/>
    <lineage>
        <taxon>Bacteria</taxon>
        <taxon>Pseudomonadati</taxon>
        <taxon>Pseudomonadota</taxon>
        <taxon>Gammaproteobacteria</taxon>
        <taxon>Enterobacterales</taxon>
        <taxon>Enterobacteriaceae</taxon>
        <taxon>Escherichia</taxon>
    </lineage>
</organism>
<feature type="chain" id="PRO_0000218050" description="Glucans biosynthesis protein C">
    <location>
        <begin position="1"/>
        <end position="385"/>
    </location>
</feature>
<feature type="transmembrane region" description="Helical" evidence="1">
    <location>
        <begin position="17"/>
        <end position="39"/>
    </location>
</feature>
<feature type="transmembrane region" description="Helical" evidence="1">
    <location>
        <begin position="54"/>
        <end position="76"/>
    </location>
</feature>
<feature type="transmembrane region" description="Helical" evidence="1">
    <location>
        <begin position="88"/>
        <end position="110"/>
    </location>
</feature>
<feature type="transmembrane region" description="Helical" evidence="1">
    <location>
        <begin position="136"/>
        <end position="158"/>
    </location>
</feature>
<feature type="transmembrane region" description="Helical" evidence="1">
    <location>
        <begin position="179"/>
        <end position="198"/>
    </location>
</feature>
<feature type="transmembrane region" description="Helical" evidence="1">
    <location>
        <begin position="213"/>
        <end position="235"/>
    </location>
</feature>
<feature type="transmembrane region" description="Helical" evidence="1">
    <location>
        <begin position="242"/>
        <end position="261"/>
    </location>
</feature>
<feature type="transmembrane region" description="Helical" evidence="1">
    <location>
        <begin position="276"/>
        <end position="295"/>
    </location>
</feature>
<feature type="transmembrane region" description="Helical" evidence="1">
    <location>
        <begin position="308"/>
        <end position="330"/>
    </location>
</feature>
<feature type="transmembrane region" description="Helical" evidence="1">
    <location>
        <begin position="334"/>
        <end position="356"/>
    </location>
</feature>
<comment type="function">
    <text evidence="1">Necessary for the succinyl substitution of periplasmic glucans. Could catalyze the transfer of succinyl residues from the cytoplasmic side of the membrane to the nascent glucan backbones on the periplasmic side of the membrane.</text>
</comment>
<comment type="pathway">
    <text evidence="1">Glycan metabolism; osmoregulated periplasmic glucan (OPG) biosynthesis.</text>
</comment>
<comment type="subcellular location">
    <subcellularLocation>
        <location evidence="1">Cell membrane</location>
        <topology evidence="1">Multi-pass membrane protein</topology>
    </subcellularLocation>
</comment>
<comment type="similarity">
    <text evidence="1">Belongs to the acyltransferase 3 family. OpgC subfamily.</text>
</comment>
<keyword id="KW-0012">Acyltransferase</keyword>
<keyword id="KW-1003">Cell membrane</keyword>
<keyword id="KW-0472">Membrane</keyword>
<keyword id="KW-1185">Reference proteome</keyword>
<keyword id="KW-0808">Transferase</keyword>
<keyword id="KW-0812">Transmembrane</keyword>
<keyword id="KW-1133">Transmembrane helix</keyword>
<evidence type="ECO:0000255" key="1">
    <source>
        <dbReference type="HAMAP-Rule" id="MF_01066"/>
    </source>
</evidence>
<sequence>MNPVPAQREYFLDSIRAWLMLLGIPFHISLIYSSHTWHVNSAEPSLWLTLFNDFIHSFRMQVFFVISGYFSYMLFLRYPLKKWWKVRVERVGIPMLTAIPLLTLPQFIMLQYVKGKAESWPGLSLYDKYNTLAWELISHLWFLLVLVVMTTLCVWIFKRIRNNLENSDKTNKKFSMVKLSVIFLCLGIGYAVIRRTIFIVYPPILSNGMFNFIVMQTLFYLPFFILGALAFIFPHLKALFTTPSRGCTLAAALAFVAYLLNQRYGSGDAWMYETESVITMVLGLWMVNVVFSFGHRLLNFQSARVTYFVNASLFIYLVHHPLTLFFGAYITPHITSNWLGFLCGLIFVVGIAIILYEIHLRIPLLKFLFSGKPVVKRENDKAPAR</sequence>
<protein>
    <recommendedName>
        <fullName evidence="1">Glucans biosynthesis protein C</fullName>
        <ecNumber evidence="1">2.1.-.-</ecNumber>
    </recommendedName>
</protein>